<reference key="1">
    <citation type="journal article" date="2006" name="J. Bacteriol.">
        <title>Comparison of the genome sequence of the poultry pathogen Bordetella avium with those of B. bronchiseptica, B. pertussis, and B. parapertussis reveals extensive diversity in surface structures associated with host interaction.</title>
        <authorList>
            <person name="Sebaihia M."/>
            <person name="Preston A."/>
            <person name="Maskell D.J."/>
            <person name="Kuzmiak H."/>
            <person name="Connell T.D."/>
            <person name="King N.D."/>
            <person name="Orndorff P.E."/>
            <person name="Miyamoto D.M."/>
            <person name="Thomson N.R."/>
            <person name="Harris D."/>
            <person name="Goble A."/>
            <person name="Lord A."/>
            <person name="Murphy L."/>
            <person name="Quail M.A."/>
            <person name="Rutter S."/>
            <person name="Squares R."/>
            <person name="Squares S."/>
            <person name="Woodward J."/>
            <person name="Parkhill J."/>
            <person name="Temple L.M."/>
        </authorList>
    </citation>
    <scope>NUCLEOTIDE SEQUENCE [LARGE SCALE GENOMIC DNA]</scope>
    <source>
        <strain>197N</strain>
    </source>
</reference>
<accession>Q2L147</accession>
<comment type="function">
    <text evidence="1">Condensation of UDP-2,3-diacylglucosamine and 2,3-diacylglucosamine-1-phosphate to form lipid A disaccharide, a precursor of lipid A, a phosphorylated glycolipid that anchors the lipopolysaccharide to the outer membrane of the cell.</text>
</comment>
<comment type="catalytic activity">
    <reaction evidence="1">
        <text>a lipid X + a UDP-2-N,3-O-bis[(3R)-3-hydroxyacyl]-alpha-D-glucosamine = a lipid A disaccharide + UDP + H(+)</text>
        <dbReference type="Rhea" id="RHEA:67828"/>
        <dbReference type="ChEBI" id="CHEBI:15378"/>
        <dbReference type="ChEBI" id="CHEBI:58223"/>
        <dbReference type="ChEBI" id="CHEBI:137748"/>
        <dbReference type="ChEBI" id="CHEBI:176338"/>
        <dbReference type="ChEBI" id="CHEBI:176343"/>
        <dbReference type="EC" id="2.4.1.182"/>
    </reaction>
</comment>
<comment type="pathway">
    <text evidence="1">Bacterial outer membrane biogenesis; LPS lipid A biosynthesis.</text>
</comment>
<comment type="similarity">
    <text evidence="1">Belongs to the LpxB family.</text>
</comment>
<feature type="chain" id="PRO_0000255162" description="Lipid-A-disaccharide synthase">
    <location>
        <begin position="1"/>
        <end position="395"/>
    </location>
</feature>
<sequence>MSLSIGMVAGEPSGDLLAGRIIGGLRAGAPDVHCAGIGGPQMQAQGFEAWHPMHALTVFGYIDALKRIPSLLSIYGQTKQRMLAERPAAFVGIDAPDFNLRLELQLRQAGIPTVHFVGPSIWAWRYERIHKIRAAVSHMLVLFPFEEEIYQKEGIPVTYVGHPLAGVIPMRPDRAAARLRLNLDVGERVLAILPGSRSSEIRTLAPRFLQAAQLLQARDPALCCVVPMVNPQRRAEFEQILAQYPVQGLRCITAEDVQGNGATPVAWSVMEAADAVLVASGTATLETALYKRPMVISYVLTPWMRRIMAWKSGQQRPYLPWVGLPNVLLKDFAVPELLQDDATPEKLAEAAWTALTDKDNAARIEARFTAMHEELLRDTPALAAKAILEVAHGAG</sequence>
<proteinExistence type="inferred from homology"/>
<name>LPXB_BORA1</name>
<evidence type="ECO:0000255" key="1">
    <source>
        <dbReference type="HAMAP-Rule" id="MF_00392"/>
    </source>
</evidence>
<keyword id="KW-0328">Glycosyltransferase</keyword>
<keyword id="KW-0441">Lipid A biosynthesis</keyword>
<keyword id="KW-0444">Lipid biosynthesis</keyword>
<keyword id="KW-0443">Lipid metabolism</keyword>
<keyword id="KW-1185">Reference proteome</keyword>
<keyword id="KW-0808">Transferase</keyword>
<organism>
    <name type="scientific">Bordetella avium (strain 197N)</name>
    <dbReference type="NCBI Taxonomy" id="360910"/>
    <lineage>
        <taxon>Bacteria</taxon>
        <taxon>Pseudomonadati</taxon>
        <taxon>Pseudomonadota</taxon>
        <taxon>Betaproteobacteria</taxon>
        <taxon>Burkholderiales</taxon>
        <taxon>Alcaligenaceae</taxon>
        <taxon>Bordetella</taxon>
    </lineage>
</organism>
<gene>
    <name evidence="1" type="primary">lpxB</name>
    <name type="ordered locus">BAV1747</name>
</gene>
<dbReference type="EC" id="2.4.1.182" evidence="1"/>
<dbReference type="EMBL" id="AM167904">
    <property type="protein sequence ID" value="CAJ49355.1"/>
    <property type="molecule type" value="Genomic_DNA"/>
</dbReference>
<dbReference type="RefSeq" id="WP_012417416.1">
    <property type="nucleotide sequence ID" value="NC_010645.1"/>
</dbReference>
<dbReference type="SMR" id="Q2L147"/>
<dbReference type="STRING" id="360910.BAV1747"/>
<dbReference type="CAZy" id="GT19">
    <property type="family name" value="Glycosyltransferase Family 19"/>
</dbReference>
<dbReference type="GeneID" id="92935192"/>
<dbReference type="KEGG" id="bav:BAV1747"/>
<dbReference type="eggNOG" id="COG0763">
    <property type="taxonomic scope" value="Bacteria"/>
</dbReference>
<dbReference type="HOGENOM" id="CLU_036577_3_0_4"/>
<dbReference type="OrthoDB" id="9801642at2"/>
<dbReference type="UniPathway" id="UPA00973"/>
<dbReference type="Proteomes" id="UP000001977">
    <property type="component" value="Chromosome"/>
</dbReference>
<dbReference type="GO" id="GO:0016020">
    <property type="term" value="C:membrane"/>
    <property type="evidence" value="ECO:0007669"/>
    <property type="project" value="GOC"/>
</dbReference>
<dbReference type="GO" id="GO:0008915">
    <property type="term" value="F:lipid-A-disaccharide synthase activity"/>
    <property type="evidence" value="ECO:0007669"/>
    <property type="project" value="UniProtKB-UniRule"/>
</dbReference>
<dbReference type="GO" id="GO:0005543">
    <property type="term" value="F:phospholipid binding"/>
    <property type="evidence" value="ECO:0007669"/>
    <property type="project" value="TreeGrafter"/>
</dbReference>
<dbReference type="GO" id="GO:0009245">
    <property type="term" value="P:lipid A biosynthetic process"/>
    <property type="evidence" value="ECO:0007669"/>
    <property type="project" value="UniProtKB-UniRule"/>
</dbReference>
<dbReference type="HAMAP" id="MF_00392">
    <property type="entry name" value="LpxB"/>
    <property type="match status" value="1"/>
</dbReference>
<dbReference type="InterPro" id="IPR003835">
    <property type="entry name" value="Glyco_trans_19"/>
</dbReference>
<dbReference type="NCBIfam" id="TIGR00215">
    <property type="entry name" value="lpxB"/>
    <property type="match status" value="1"/>
</dbReference>
<dbReference type="PANTHER" id="PTHR30372">
    <property type="entry name" value="LIPID-A-DISACCHARIDE SYNTHASE"/>
    <property type="match status" value="1"/>
</dbReference>
<dbReference type="PANTHER" id="PTHR30372:SF4">
    <property type="entry name" value="LIPID-A-DISACCHARIDE SYNTHASE, MITOCHONDRIAL-RELATED"/>
    <property type="match status" value="1"/>
</dbReference>
<dbReference type="Pfam" id="PF02684">
    <property type="entry name" value="LpxB"/>
    <property type="match status" value="1"/>
</dbReference>
<dbReference type="SUPFAM" id="SSF53756">
    <property type="entry name" value="UDP-Glycosyltransferase/glycogen phosphorylase"/>
    <property type="match status" value="1"/>
</dbReference>
<protein>
    <recommendedName>
        <fullName evidence="1">Lipid-A-disaccharide synthase</fullName>
        <ecNumber evidence="1">2.4.1.182</ecNumber>
    </recommendedName>
</protein>